<organism>
    <name type="scientific">Hyperthermus butylicus (strain DSM 5456 / JCM 9403 / PLM1-5)</name>
    <dbReference type="NCBI Taxonomy" id="415426"/>
    <lineage>
        <taxon>Archaea</taxon>
        <taxon>Thermoproteota</taxon>
        <taxon>Thermoprotei</taxon>
        <taxon>Desulfurococcales</taxon>
        <taxon>Pyrodictiaceae</taxon>
        <taxon>Hyperthermus</taxon>
    </lineage>
</organism>
<protein>
    <recommendedName>
        <fullName evidence="1">7-carboxy-7-deazaguanine synthase</fullName>
        <shortName evidence="1">CDG synthase</shortName>
        <ecNumber evidence="1">4.3.99.3</ecNumber>
    </recommendedName>
    <alternativeName>
        <fullName evidence="1">Archaeosine biosynthesis protein QueE</fullName>
    </alternativeName>
</protein>
<proteinExistence type="inferred from homology"/>
<evidence type="ECO:0000255" key="1">
    <source>
        <dbReference type="HAMAP-Rule" id="MF_00917"/>
    </source>
</evidence>
<evidence type="ECO:0000255" key="2">
    <source>
        <dbReference type="PROSITE-ProRule" id="PRU01266"/>
    </source>
</evidence>
<name>QUEE_HYPBU</name>
<reference key="1">
    <citation type="journal article" date="2007" name="Archaea">
        <title>The genome of Hyperthermus butylicus: a sulfur-reducing, peptide fermenting, neutrophilic Crenarchaeote growing up to 108 degrees C.</title>
        <authorList>
            <person name="Bruegger K."/>
            <person name="Chen L."/>
            <person name="Stark M."/>
            <person name="Zibat A."/>
            <person name="Redder P."/>
            <person name="Ruepp A."/>
            <person name="Awayez M."/>
            <person name="She Q."/>
            <person name="Garrett R.A."/>
            <person name="Klenk H.-P."/>
        </authorList>
    </citation>
    <scope>NUCLEOTIDE SEQUENCE [LARGE SCALE GENOMIC DNA]</scope>
    <source>
        <strain>DSM 5456 / JCM 9403 / PLM1-5</strain>
    </source>
</reference>
<sequence length="235" mass="26499">MSRSARRKTSALNTVLRVVEVFASIQGEGPFTGTYSVFVRLAGCNLRCPFCDTRYAWSLEAGKPLGVEELVEEIARYEPSLVVITGGEPLLQRHPLNSLVEGLESLGLRVQLETNGILPAPARDEQLWRVYHVVSPKDVPVRVPGAKLHPSWVDYARATGRAWFKFLVANEQHVREVAEYVAKLGIPRSRVYIMPLTPEKLDMKELLELHSRIASLAVKWRLNFSPRLHLLVQLP</sequence>
<dbReference type="EC" id="4.3.99.3" evidence="1"/>
<dbReference type="EMBL" id="CP000493">
    <property type="protein sequence ID" value="ABM80051.1"/>
    <property type="molecule type" value="Genomic_DNA"/>
</dbReference>
<dbReference type="RefSeq" id="WP_011821368.1">
    <property type="nucleotide sequence ID" value="NC_008818.1"/>
</dbReference>
<dbReference type="SMR" id="A2BJ90"/>
<dbReference type="STRING" id="415426.Hbut_0179"/>
<dbReference type="EnsemblBacteria" id="ABM80051">
    <property type="protein sequence ID" value="ABM80051"/>
    <property type="gene ID" value="Hbut_0179"/>
</dbReference>
<dbReference type="GeneID" id="4781983"/>
<dbReference type="KEGG" id="hbu:Hbut_0179"/>
<dbReference type="eggNOG" id="arCOG02173">
    <property type="taxonomic scope" value="Archaea"/>
</dbReference>
<dbReference type="HOGENOM" id="CLU_066739_2_1_2"/>
<dbReference type="OrthoDB" id="371936at2157"/>
<dbReference type="UniPathway" id="UPA00391"/>
<dbReference type="Proteomes" id="UP000002593">
    <property type="component" value="Chromosome"/>
</dbReference>
<dbReference type="GO" id="GO:0051539">
    <property type="term" value="F:4 iron, 4 sulfur cluster binding"/>
    <property type="evidence" value="ECO:0007669"/>
    <property type="project" value="UniProtKB-UniRule"/>
</dbReference>
<dbReference type="GO" id="GO:0016840">
    <property type="term" value="F:carbon-nitrogen lyase activity"/>
    <property type="evidence" value="ECO:0007669"/>
    <property type="project" value="UniProtKB-UniRule"/>
</dbReference>
<dbReference type="GO" id="GO:0000287">
    <property type="term" value="F:magnesium ion binding"/>
    <property type="evidence" value="ECO:0007669"/>
    <property type="project" value="UniProtKB-UniRule"/>
</dbReference>
<dbReference type="GO" id="GO:1904047">
    <property type="term" value="F:S-adenosyl-L-methionine binding"/>
    <property type="evidence" value="ECO:0007669"/>
    <property type="project" value="UniProtKB-UniRule"/>
</dbReference>
<dbReference type="CDD" id="cd01335">
    <property type="entry name" value="Radical_SAM"/>
    <property type="match status" value="1"/>
</dbReference>
<dbReference type="Gene3D" id="3.20.20.70">
    <property type="entry name" value="Aldolase class I"/>
    <property type="match status" value="1"/>
</dbReference>
<dbReference type="HAMAP" id="MF_00917">
    <property type="entry name" value="QueE"/>
    <property type="match status" value="1"/>
</dbReference>
<dbReference type="InterPro" id="IPR024924">
    <property type="entry name" value="7-CO-7-deazaguanine_synth-like"/>
</dbReference>
<dbReference type="InterPro" id="IPR013785">
    <property type="entry name" value="Aldolase_TIM"/>
</dbReference>
<dbReference type="InterPro" id="IPR007197">
    <property type="entry name" value="rSAM"/>
</dbReference>
<dbReference type="PANTHER" id="PTHR42836">
    <property type="entry name" value="7-CARBOXY-7-DEAZAGUANINE SYNTHASE"/>
    <property type="match status" value="1"/>
</dbReference>
<dbReference type="PANTHER" id="PTHR42836:SF1">
    <property type="entry name" value="7-CARBOXY-7-DEAZAGUANINE SYNTHASE"/>
    <property type="match status" value="1"/>
</dbReference>
<dbReference type="Pfam" id="PF13353">
    <property type="entry name" value="Fer4_12"/>
    <property type="match status" value="1"/>
</dbReference>
<dbReference type="Pfam" id="PF04055">
    <property type="entry name" value="Radical_SAM"/>
    <property type="match status" value="1"/>
</dbReference>
<dbReference type="PIRSF" id="PIRSF000370">
    <property type="entry name" value="QueE"/>
    <property type="match status" value="1"/>
</dbReference>
<dbReference type="SFLD" id="SFLDS00029">
    <property type="entry name" value="Radical_SAM"/>
    <property type="match status" value="1"/>
</dbReference>
<dbReference type="SUPFAM" id="SSF102114">
    <property type="entry name" value="Radical SAM enzymes"/>
    <property type="match status" value="1"/>
</dbReference>
<dbReference type="PROSITE" id="PS51918">
    <property type="entry name" value="RADICAL_SAM"/>
    <property type="match status" value="1"/>
</dbReference>
<accession>A2BJ90</accession>
<feature type="chain" id="PRO_0000416216" description="7-carboxy-7-deazaguanine synthase">
    <location>
        <begin position="1"/>
        <end position="235"/>
    </location>
</feature>
<feature type="domain" description="Radical SAM core" evidence="2">
    <location>
        <begin position="31"/>
        <end position="235"/>
    </location>
</feature>
<feature type="binding site" evidence="1">
    <location>
        <begin position="25"/>
        <end position="27"/>
    </location>
    <ligand>
        <name>substrate</name>
    </ligand>
</feature>
<feature type="binding site" evidence="1">
    <location>
        <position position="40"/>
    </location>
    <ligand>
        <name>substrate</name>
    </ligand>
</feature>
<feature type="binding site" evidence="1">
    <location>
        <position position="44"/>
    </location>
    <ligand>
        <name>[4Fe-4S] cluster</name>
        <dbReference type="ChEBI" id="CHEBI:49883"/>
        <note>4Fe-4S-S-AdoMet</note>
    </ligand>
</feature>
<feature type="binding site" evidence="1">
    <location>
        <position position="48"/>
    </location>
    <ligand>
        <name>[4Fe-4S] cluster</name>
        <dbReference type="ChEBI" id="CHEBI:49883"/>
        <note>4Fe-4S-S-AdoMet</note>
    </ligand>
</feature>
<feature type="binding site" evidence="1">
    <location>
        <position position="51"/>
    </location>
    <ligand>
        <name>[4Fe-4S] cluster</name>
        <dbReference type="ChEBI" id="CHEBI:49883"/>
        <note>4Fe-4S-S-AdoMet</note>
    </ligand>
</feature>
<feature type="binding site" evidence="1">
    <location>
        <position position="53"/>
    </location>
    <ligand>
        <name>Mg(2+)</name>
        <dbReference type="ChEBI" id="CHEBI:18420"/>
    </ligand>
</feature>
<feature type="binding site" evidence="1">
    <location>
        <position position="85"/>
    </location>
    <ligand>
        <name>substrate</name>
    </ligand>
</feature>
<feature type="binding site" evidence="1">
    <location>
        <position position="87"/>
    </location>
    <ligand>
        <name>S-adenosyl-L-methionine</name>
        <dbReference type="ChEBI" id="CHEBI:59789"/>
    </ligand>
</feature>
<feature type="binding site" evidence="1">
    <location>
        <begin position="135"/>
        <end position="137"/>
    </location>
    <ligand>
        <name>S-adenosyl-L-methionine</name>
        <dbReference type="ChEBI" id="CHEBI:59789"/>
    </ligand>
</feature>
<feature type="binding site" evidence="1">
    <location>
        <position position="235"/>
    </location>
    <ligand>
        <name>substrate</name>
    </ligand>
</feature>
<comment type="function">
    <text evidence="1">Catalyzes the complex heterocyclic radical-mediated conversion of 6-carboxy-5,6,7,8-tetrahydropterin (CPH4) to 7-carboxy-7-deazaguanine (CDG), a step common to the biosynthetic pathways of all 7-deazapurine-containing compounds.</text>
</comment>
<comment type="catalytic activity">
    <reaction evidence="1">
        <text>6-carboxy-5,6,7,8-tetrahydropterin + H(+) = 7-carboxy-7-deazaguanine + NH4(+)</text>
        <dbReference type="Rhea" id="RHEA:27974"/>
        <dbReference type="ChEBI" id="CHEBI:15378"/>
        <dbReference type="ChEBI" id="CHEBI:28938"/>
        <dbReference type="ChEBI" id="CHEBI:61032"/>
        <dbReference type="ChEBI" id="CHEBI:61036"/>
        <dbReference type="EC" id="4.3.99.3"/>
    </reaction>
</comment>
<comment type="cofactor">
    <cofactor evidence="1">
        <name>[4Fe-4S] cluster</name>
        <dbReference type="ChEBI" id="CHEBI:49883"/>
    </cofactor>
    <text evidence="1">Binds 1 [4Fe-4S] cluster. The cluster is coordinated with 3 cysteines and an exchangeable S-adenosyl-L-methionine.</text>
</comment>
<comment type="cofactor">
    <cofactor evidence="1">
        <name>S-adenosyl-L-methionine</name>
        <dbReference type="ChEBI" id="CHEBI:59789"/>
    </cofactor>
    <text evidence="1">Binds 1 S-adenosyl-L-methionine per subunit.</text>
</comment>
<comment type="cofactor">
    <cofactor evidence="1">
        <name>Mg(2+)</name>
        <dbReference type="ChEBI" id="CHEBI:18420"/>
    </cofactor>
</comment>
<comment type="pathway">
    <text evidence="1">Purine metabolism; 7-cyano-7-deazaguanine biosynthesis.</text>
</comment>
<comment type="subunit">
    <text evidence="1">Homodimer.</text>
</comment>
<comment type="similarity">
    <text evidence="1">Belongs to the radical SAM superfamily. 7-carboxy-7-deazaguanine synthase family.</text>
</comment>
<gene>
    <name evidence="1" type="primary">queE</name>
    <name type="ordered locus">Hbut_0179</name>
</gene>
<keyword id="KW-0004">4Fe-4S</keyword>
<keyword id="KW-0408">Iron</keyword>
<keyword id="KW-0411">Iron-sulfur</keyword>
<keyword id="KW-0456">Lyase</keyword>
<keyword id="KW-0460">Magnesium</keyword>
<keyword id="KW-0479">Metal-binding</keyword>
<keyword id="KW-1185">Reference proteome</keyword>
<keyword id="KW-0949">S-adenosyl-L-methionine</keyword>